<gene>
    <name type="primary">PCDHGA3</name>
</gene>
<comment type="function">
    <text>Potential calcium-dependent cell-adhesion protein. May be involved in the establishment and maintenance of specific neuronal connections in the brain.</text>
</comment>
<comment type="subcellular location">
    <subcellularLocation>
        <location evidence="1">Cell membrane</location>
        <topology evidence="1">Single-pass type I membrane protein</topology>
    </subcellularLocation>
</comment>
<keyword id="KW-0106">Calcium</keyword>
<keyword id="KW-0130">Cell adhesion</keyword>
<keyword id="KW-1003">Cell membrane</keyword>
<keyword id="KW-0325">Glycoprotein</keyword>
<keyword id="KW-0472">Membrane</keyword>
<keyword id="KW-1185">Reference proteome</keyword>
<keyword id="KW-0677">Repeat</keyword>
<keyword id="KW-0732">Signal</keyword>
<keyword id="KW-0812">Transmembrane</keyword>
<keyword id="KW-1133">Transmembrane helix</keyword>
<organism>
    <name type="scientific">Pan troglodytes</name>
    <name type="common">Chimpanzee</name>
    <dbReference type="NCBI Taxonomy" id="9598"/>
    <lineage>
        <taxon>Eukaryota</taxon>
        <taxon>Metazoa</taxon>
        <taxon>Chordata</taxon>
        <taxon>Craniata</taxon>
        <taxon>Vertebrata</taxon>
        <taxon>Euteleostomi</taxon>
        <taxon>Mammalia</taxon>
        <taxon>Eutheria</taxon>
        <taxon>Euarchontoglires</taxon>
        <taxon>Primates</taxon>
        <taxon>Haplorrhini</taxon>
        <taxon>Catarrhini</taxon>
        <taxon>Hominidae</taxon>
        <taxon>Pan</taxon>
    </lineage>
</organism>
<protein>
    <recommendedName>
        <fullName>Protocadherin gamma-A3</fullName>
        <shortName>PCDH-gamma-A3</shortName>
    </recommendedName>
</protein>
<feature type="signal peptide" evidence="2">
    <location>
        <begin position="1"/>
        <end position="29"/>
    </location>
</feature>
<feature type="chain" id="PRO_0000003953" description="Protocadherin gamma-A3">
    <location>
        <begin position="30"/>
        <end position="932"/>
    </location>
</feature>
<feature type="topological domain" description="Extracellular" evidence="2">
    <location>
        <begin position="30"/>
        <end position="692"/>
    </location>
</feature>
<feature type="transmembrane region" description="Helical" evidence="2">
    <location>
        <begin position="693"/>
        <end position="713"/>
    </location>
</feature>
<feature type="topological domain" description="Cytoplasmic" evidence="2">
    <location>
        <begin position="714"/>
        <end position="932"/>
    </location>
</feature>
<feature type="domain" description="Cadherin 1" evidence="3">
    <location>
        <begin position="30"/>
        <end position="133"/>
    </location>
</feature>
<feature type="domain" description="Cadherin 2" evidence="3">
    <location>
        <begin position="134"/>
        <end position="242"/>
    </location>
</feature>
<feature type="domain" description="Cadherin 3" evidence="3">
    <location>
        <begin position="243"/>
        <end position="347"/>
    </location>
</feature>
<feature type="domain" description="Cadherin 4" evidence="3">
    <location>
        <begin position="348"/>
        <end position="452"/>
    </location>
</feature>
<feature type="domain" description="Cadherin 5" evidence="3">
    <location>
        <begin position="453"/>
        <end position="562"/>
    </location>
</feature>
<feature type="domain" description="Cadherin 6" evidence="3">
    <location>
        <begin position="570"/>
        <end position="682"/>
    </location>
</feature>
<feature type="region of interest" description="Disordered" evidence="4">
    <location>
        <begin position="806"/>
        <end position="841"/>
    </location>
</feature>
<feature type="region of interest" description="Disordered" evidence="4">
    <location>
        <begin position="902"/>
        <end position="932"/>
    </location>
</feature>
<feature type="compositionally biased region" description="Basic residues" evidence="4">
    <location>
        <begin position="922"/>
        <end position="932"/>
    </location>
</feature>
<feature type="glycosylation site" description="N-linked (GlcNAc...) asparagine" evidence="2">
    <location>
        <position position="265"/>
    </location>
</feature>
<feature type="glycosylation site" description="N-linked (GlcNAc...) asparagine" evidence="2">
    <location>
        <position position="419"/>
    </location>
</feature>
<feature type="glycosylation site" description="N-linked (GlcNAc...) asparagine" evidence="2">
    <location>
        <position position="545"/>
    </location>
</feature>
<feature type="glycosylation site" description="N-linked (GlcNAc...) asparagine" evidence="2">
    <location>
        <position position="685"/>
    </location>
</feature>
<reference key="1">
    <citation type="journal article" date="2005" name="Nature">
        <title>Initial sequence of the chimpanzee genome and comparison with the human genome.</title>
        <authorList>
            <consortium name="Chimpanzee sequencing and analysis consortium"/>
        </authorList>
    </citation>
    <scope>NUCLEOTIDE SEQUENCE [LARGE SCALE GENOMIC DNA]</scope>
</reference>
<reference key="2">
    <citation type="journal article" date="2005" name="Genetics">
        <title>Comparative genomics and diversifying selection of the clustered vertebrate protocadherin genes.</title>
        <authorList>
            <person name="Wu Q."/>
        </authorList>
    </citation>
    <scope>IDENTIFICATION</scope>
</reference>
<sequence>MTNCLSFRNGRGLALLCALLGTLCETGSGQIRYSVSEELDKGSFVGNIANDLGLEPRELAERGVRIVSRGRTQLFSLNPQSGSLVTAERIDREELCAQIPLCLVKFNILVEDKLKIFEVEIEIKDINDNAPNFPTEELEIKIGELTVPGTRFPLKTAFDPDVGINSLQNYKLSPNDYFSLAVNSVSEGAKYPELVLERALDREKREIHQLVLVASDGGDPVHSGNLHIQVIVLDANDNPPMFTQPEYRVSVWENVPVGTRLLTVNATDPDEGFNAQVSYILDKMPGKIAEIFHLNSVSGEVSILKSLDYEDAMFYEIKIEAQDGPGLLSRAKILVTVLDVNDNAPEITITSLTSSVPEEGTVGREIALIDVHDRDSGQNGQVEVFVLGNLPFKLEKSVDQYYRLVTATSLDREQISEYNISLRASDGGSPPLSTETHITLHVIDINDNPPTFPHLSYSAYIPENNPRGASIFSVTAQDPDSNNNARITYALTEDTLQGAPLSSFVSINSNTGVLYALRSFDYEQFRDLKLLVTASDSGNPPLSSNVSLNLFVLDQNDNAPEILYPALPTDGSTGVELAPRSAEPGYLVTKVVAVDRDSGQNAWLSYRLLKASEPGLFSVGLHTGEVRTARALLDRDALKQSLVVAVQDHGQPPLSATVTLTVAVADRIPDILADLGSLEPSAKPNDSDLTLYLVVAVAAVSCVFLALVIVLLAHRLRRWHKSRLLQASGGGLASTPGSHFVGVDGVRAFLQTYSHEVSLTADSRKSHLIFPQPNYADTLISQESCEKSEPLLITQDLLEMKGDSNLLQQAPPNTDWRFSQAQRPGTSGSQNGDDTGTWPNNQFDTEMLQAMILASASEAADGSSTLGGGAGTMGLSARYGPQFTLQHVPDYRQNVYIPGSNATLTNAAGKRDGKAPAGGNGNKKKSGKKEKK</sequence>
<proteinExistence type="inferred from homology"/>
<name>PCDG3_PANTR</name>
<dbReference type="RefSeq" id="NP_001076013.3">
    <property type="nucleotide sequence ID" value="NM_001082544.4"/>
</dbReference>
<dbReference type="SMR" id="Q5DRB7"/>
<dbReference type="FunCoup" id="Q5DRB7">
    <property type="interactions" value="6"/>
</dbReference>
<dbReference type="GlyCosmos" id="Q5DRB7">
    <property type="glycosylation" value="4 sites, No reported glycans"/>
</dbReference>
<dbReference type="GeneID" id="738470"/>
<dbReference type="KEGG" id="ptr:738470"/>
<dbReference type="CTD" id="56112"/>
<dbReference type="InParanoid" id="Q5DRB7"/>
<dbReference type="Proteomes" id="UP000002277">
    <property type="component" value="Unplaced"/>
</dbReference>
<dbReference type="GO" id="GO:0005886">
    <property type="term" value="C:plasma membrane"/>
    <property type="evidence" value="ECO:0000318"/>
    <property type="project" value="GO_Central"/>
</dbReference>
<dbReference type="GO" id="GO:0005509">
    <property type="term" value="F:calcium ion binding"/>
    <property type="evidence" value="ECO:0007669"/>
    <property type="project" value="InterPro"/>
</dbReference>
<dbReference type="GO" id="GO:0007155">
    <property type="term" value="P:cell adhesion"/>
    <property type="evidence" value="ECO:0000318"/>
    <property type="project" value="GO_Central"/>
</dbReference>
<dbReference type="GO" id="GO:0007156">
    <property type="term" value="P:homophilic cell adhesion via plasma membrane adhesion molecules"/>
    <property type="evidence" value="ECO:0007669"/>
    <property type="project" value="InterPro"/>
</dbReference>
<dbReference type="GO" id="GO:0007399">
    <property type="term" value="P:nervous system development"/>
    <property type="evidence" value="ECO:0007669"/>
    <property type="project" value="UniProtKB-ARBA"/>
</dbReference>
<dbReference type="CDD" id="cd11304">
    <property type="entry name" value="Cadherin_repeat"/>
    <property type="match status" value="6"/>
</dbReference>
<dbReference type="FunFam" id="2.60.40.60:FF:000004">
    <property type="entry name" value="Protocadherin 1 gamma 2"/>
    <property type="match status" value="1"/>
</dbReference>
<dbReference type="FunFam" id="2.60.40.60:FF:000001">
    <property type="entry name" value="Protocadherin alpha 2"/>
    <property type="match status" value="1"/>
</dbReference>
<dbReference type="FunFam" id="2.60.40.60:FF:000002">
    <property type="entry name" value="Protocadherin alpha 2"/>
    <property type="match status" value="1"/>
</dbReference>
<dbReference type="FunFam" id="2.60.40.60:FF:000006">
    <property type="entry name" value="Protocadherin alpha 2"/>
    <property type="match status" value="1"/>
</dbReference>
<dbReference type="FunFam" id="2.60.40.60:FF:000129">
    <property type="entry name" value="protocadherin alpha-C2 isoform X1"/>
    <property type="match status" value="1"/>
</dbReference>
<dbReference type="FunFam" id="2.60.40.60:FF:000018">
    <property type="entry name" value="Protocadherin gamma c3"/>
    <property type="match status" value="1"/>
</dbReference>
<dbReference type="Gene3D" id="2.60.40.60">
    <property type="entry name" value="Cadherins"/>
    <property type="match status" value="6"/>
</dbReference>
<dbReference type="InterPro" id="IPR002126">
    <property type="entry name" value="Cadherin-like_dom"/>
</dbReference>
<dbReference type="InterPro" id="IPR015919">
    <property type="entry name" value="Cadherin-like_sf"/>
</dbReference>
<dbReference type="InterPro" id="IPR032455">
    <property type="entry name" value="Cadherin_C"/>
</dbReference>
<dbReference type="InterPro" id="IPR031904">
    <property type="entry name" value="Cadherin_CBD"/>
</dbReference>
<dbReference type="InterPro" id="IPR020894">
    <property type="entry name" value="Cadherin_CS"/>
</dbReference>
<dbReference type="InterPro" id="IPR013164">
    <property type="entry name" value="Cadherin_N"/>
</dbReference>
<dbReference type="InterPro" id="IPR050174">
    <property type="entry name" value="Protocadherin/Cadherin-CA"/>
</dbReference>
<dbReference type="PANTHER" id="PTHR24028">
    <property type="entry name" value="CADHERIN-87A"/>
    <property type="match status" value="1"/>
</dbReference>
<dbReference type="PANTHER" id="PTHR24028:SF234">
    <property type="entry name" value="PROTOCADHERIN GAMMA-A3"/>
    <property type="match status" value="1"/>
</dbReference>
<dbReference type="Pfam" id="PF00028">
    <property type="entry name" value="Cadherin"/>
    <property type="match status" value="4"/>
</dbReference>
<dbReference type="Pfam" id="PF08266">
    <property type="entry name" value="Cadherin_2"/>
    <property type="match status" value="1"/>
</dbReference>
<dbReference type="Pfam" id="PF16492">
    <property type="entry name" value="Cadherin_C_2"/>
    <property type="match status" value="1"/>
</dbReference>
<dbReference type="Pfam" id="PF15974">
    <property type="entry name" value="Cadherin_tail"/>
    <property type="match status" value="1"/>
</dbReference>
<dbReference type="PRINTS" id="PR00205">
    <property type="entry name" value="CADHERIN"/>
</dbReference>
<dbReference type="SMART" id="SM00112">
    <property type="entry name" value="CA"/>
    <property type="match status" value="6"/>
</dbReference>
<dbReference type="SUPFAM" id="SSF49313">
    <property type="entry name" value="Cadherin-like"/>
    <property type="match status" value="6"/>
</dbReference>
<dbReference type="PROSITE" id="PS00232">
    <property type="entry name" value="CADHERIN_1"/>
    <property type="match status" value="5"/>
</dbReference>
<dbReference type="PROSITE" id="PS50268">
    <property type="entry name" value="CADHERIN_2"/>
    <property type="match status" value="6"/>
</dbReference>
<evidence type="ECO:0000250" key="1"/>
<evidence type="ECO:0000255" key="2"/>
<evidence type="ECO:0000255" key="3">
    <source>
        <dbReference type="PROSITE-ProRule" id="PRU00043"/>
    </source>
</evidence>
<evidence type="ECO:0000256" key="4">
    <source>
        <dbReference type="SAM" id="MobiDB-lite"/>
    </source>
</evidence>
<accession>Q5DRB7</accession>